<name>RBSA_YERPN</name>
<accession>Q1CDJ0</accession>
<accession>D1Q1V4</accession>
<proteinExistence type="inferred from homology"/>
<dbReference type="EC" id="7.5.2.7" evidence="1"/>
<dbReference type="EMBL" id="CP000305">
    <property type="protein sequence ID" value="ABG19940.1"/>
    <property type="molecule type" value="Genomic_DNA"/>
</dbReference>
<dbReference type="EMBL" id="ACNQ01000019">
    <property type="protein sequence ID" value="EEO74507.1"/>
    <property type="molecule type" value="Genomic_DNA"/>
</dbReference>
<dbReference type="RefSeq" id="WP_002209523.1">
    <property type="nucleotide sequence ID" value="NZ_ACNQ01000019.1"/>
</dbReference>
<dbReference type="SMR" id="Q1CDJ0"/>
<dbReference type="KEGG" id="ypn:YPN_3613"/>
<dbReference type="HOGENOM" id="CLU_000604_92_3_6"/>
<dbReference type="Proteomes" id="UP000008936">
    <property type="component" value="Chromosome"/>
</dbReference>
<dbReference type="GO" id="GO:0005886">
    <property type="term" value="C:plasma membrane"/>
    <property type="evidence" value="ECO:0007669"/>
    <property type="project" value="UniProtKB-SubCell"/>
</dbReference>
<dbReference type="GO" id="GO:0015611">
    <property type="term" value="F:ABC-type D-ribose transporter activity"/>
    <property type="evidence" value="ECO:0007669"/>
    <property type="project" value="UniProtKB-EC"/>
</dbReference>
<dbReference type="GO" id="GO:0005524">
    <property type="term" value="F:ATP binding"/>
    <property type="evidence" value="ECO:0007669"/>
    <property type="project" value="UniProtKB-KW"/>
</dbReference>
<dbReference type="GO" id="GO:0016887">
    <property type="term" value="F:ATP hydrolysis activity"/>
    <property type="evidence" value="ECO:0007669"/>
    <property type="project" value="InterPro"/>
</dbReference>
<dbReference type="CDD" id="cd03216">
    <property type="entry name" value="ABC_Carb_Monos_I"/>
    <property type="match status" value="1"/>
</dbReference>
<dbReference type="CDD" id="cd03215">
    <property type="entry name" value="ABC_Carb_Monos_II"/>
    <property type="match status" value="1"/>
</dbReference>
<dbReference type="FunFam" id="3.40.50.300:FF:000127">
    <property type="entry name" value="Ribose import ATP-binding protein RbsA"/>
    <property type="match status" value="1"/>
</dbReference>
<dbReference type="Gene3D" id="3.40.50.300">
    <property type="entry name" value="P-loop containing nucleotide triphosphate hydrolases"/>
    <property type="match status" value="2"/>
</dbReference>
<dbReference type="InterPro" id="IPR003593">
    <property type="entry name" value="AAA+_ATPase"/>
</dbReference>
<dbReference type="InterPro" id="IPR050107">
    <property type="entry name" value="ABC_carbohydrate_import_ATPase"/>
</dbReference>
<dbReference type="InterPro" id="IPR003439">
    <property type="entry name" value="ABC_transporter-like_ATP-bd"/>
</dbReference>
<dbReference type="InterPro" id="IPR017871">
    <property type="entry name" value="ABC_transporter-like_CS"/>
</dbReference>
<dbReference type="InterPro" id="IPR027417">
    <property type="entry name" value="P-loop_NTPase"/>
</dbReference>
<dbReference type="PANTHER" id="PTHR43790">
    <property type="entry name" value="CARBOHYDRATE TRANSPORT ATP-BINDING PROTEIN MG119-RELATED"/>
    <property type="match status" value="1"/>
</dbReference>
<dbReference type="PANTHER" id="PTHR43790:SF3">
    <property type="entry name" value="D-ALLOSE IMPORT ATP-BINDING PROTEIN ALSA-RELATED"/>
    <property type="match status" value="1"/>
</dbReference>
<dbReference type="Pfam" id="PF00005">
    <property type="entry name" value="ABC_tran"/>
    <property type="match status" value="2"/>
</dbReference>
<dbReference type="SMART" id="SM00382">
    <property type="entry name" value="AAA"/>
    <property type="match status" value="2"/>
</dbReference>
<dbReference type="SUPFAM" id="SSF52540">
    <property type="entry name" value="P-loop containing nucleoside triphosphate hydrolases"/>
    <property type="match status" value="2"/>
</dbReference>
<dbReference type="PROSITE" id="PS00211">
    <property type="entry name" value="ABC_TRANSPORTER_1"/>
    <property type="match status" value="1"/>
</dbReference>
<dbReference type="PROSITE" id="PS50893">
    <property type="entry name" value="ABC_TRANSPORTER_2"/>
    <property type="match status" value="2"/>
</dbReference>
<dbReference type="PROSITE" id="PS51254">
    <property type="entry name" value="RBSA"/>
    <property type="match status" value="1"/>
</dbReference>
<feature type="chain" id="PRO_0000261121" description="Ribose import ATP-binding protein RbsA">
    <location>
        <begin position="1"/>
        <end position="507"/>
    </location>
</feature>
<feature type="domain" description="ABC transporter 1" evidence="1">
    <location>
        <begin position="7"/>
        <end position="242"/>
    </location>
</feature>
<feature type="domain" description="ABC transporter 2" evidence="1">
    <location>
        <begin position="253"/>
        <end position="497"/>
    </location>
</feature>
<feature type="binding site" evidence="1">
    <location>
        <begin position="39"/>
        <end position="46"/>
    </location>
    <ligand>
        <name>ATP</name>
        <dbReference type="ChEBI" id="CHEBI:30616"/>
    </ligand>
</feature>
<keyword id="KW-0067">ATP-binding</keyword>
<keyword id="KW-0997">Cell inner membrane</keyword>
<keyword id="KW-1003">Cell membrane</keyword>
<keyword id="KW-0472">Membrane</keyword>
<keyword id="KW-0547">Nucleotide-binding</keyword>
<keyword id="KW-0677">Repeat</keyword>
<keyword id="KW-0762">Sugar transport</keyword>
<keyword id="KW-1278">Translocase</keyword>
<keyword id="KW-0813">Transport</keyword>
<sequence>MNKVPLLEMRNITKSFGKFQALKGVDLTVFSGEIHALMGENGAGKSTLMKILAGAYTTTSGEILIEGRPWSIKGPKDALNAGISLIYQEMQLAPNLTVAENIFLGSELSRGGLVQRKEMVMQTQAVIDRLGAQFKASDLVMGLTIAEQQQVEIARALHRNSRILVMDEPTAALSTRETHRLFELILRLRDEGMAIIYISHRMAEVYELSDRVSVLRDGQYVGSLMRANLNANELVRMMVGRPLSDLFNKERDIPLGHLRLKVHHLTDGAKVQAVSLQVRSGEIVGLAGLVGAGRSELAQLIFGVRKATGGTIEIDGVPLVIHSPREAIRHGIGFLTENRKEQGLFLELAAQDNITMATLERDACYGLLDRKKARAISDDAINRLNIRVPHAQVRAGGLSGGNQQKLLISRWVAISPRILILDEPTRGVDVGAKSEIYRIMSQMAREGVAILMISSELPEVVGMSDRVYVMHEGRIAGELHHPDITQENIMTLATGVTEDHKKEVYHD</sequence>
<gene>
    <name evidence="1" type="primary">rbsA</name>
    <name type="ordered locus">YPN_3613</name>
    <name type="ORF">YP516_4105</name>
</gene>
<comment type="function">
    <text evidence="1">Part of the ABC transporter complex RbsABC involved in ribose import. Responsible for energy coupling to the transport system.</text>
</comment>
<comment type="catalytic activity">
    <reaction evidence="1">
        <text>D-ribose(out) + ATP + H2O = D-ribose(in) + ADP + phosphate + H(+)</text>
        <dbReference type="Rhea" id="RHEA:29903"/>
        <dbReference type="ChEBI" id="CHEBI:15377"/>
        <dbReference type="ChEBI" id="CHEBI:15378"/>
        <dbReference type="ChEBI" id="CHEBI:30616"/>
        <dbReference type="ChEBI" id="CHEBI:43474"/>
        <dbReference type="ChEBI" id="CHEBI:47013"/>
        <dbReference type="ChEBI" id="CHEBI:456216"/>
        <dbReference type="EC" id="7.5.2.7"/>
    </reaction>
</comment>
<comment type="subunit">
    <text evidence="1">The complex is composed of an ATP-binding protein (RbsA), two transmembrane proteins (RbsC) and a solute-binding protein (RbsB).</text>
</comment>
<comment type="subcellular location">
    <subcellularLocation>
        <location evidence="1">Cell inner membrane</location>
        <topology evidence="1">Peripheral membrane protein</topology>
    </subcellularLocation>
</comment>
<comment type="similarity">
    <text evidence="1">Belongs to the ABC transporter superfamily. Ribose importer (TC 3.A.1.2.1) family.</text>
</comment>
<evidence type="ECO:0000255" key="1">
    <source>
        <dbReference type="HAMAP-Rule" id="MF_01716"/>
    </source>
</evidence>
<organism>
    <name type="scientific">Yersinia pestis bv. Antiqua (strain Nepal516)</name>
    <dbReference type="NCBI Taxonomy" id="377628"/>
    <lineage>
        <taxon>Bacteria</taxon>
        <taxon>Pseudomonadati</taxon>
        <taxon>Pseudomonadota</taxon>
        <taxon>Gammaproteobacteria</taxon>
        <taxon>Enterobacterales</taxon>
        <taxon>Yersiniaceae</taxon>
        <taxon>Yersinia</taxon>
    </lineage>
</organism>
<protein>
    <recommendedName>
        <fullName evidence="1">Ribose import ATP-binding protein RbsA</fullName>
        <ecNumber evidence="1">7.5.2.7</ecNumber>
    </recommendedName>
</protein>
<reference key="1">
    <citation type="journal article" date="2006" name="J. Bacteriol.">
        <title>Complete genome sequence of Yersinia pestis strains Antiqua and Nepal516: evidence of gene reduction in an emerging pathogen.</title>
        <authorList>
            <person name="Chain P.S.G."/>
            <person name="Hu P."/>
            <person name="Malfatti S.A."/>
            <person name="Radnedge L."/>
            <person name="Larimer F."/>
            <person name="Vergez L.M."/>
            <person name="Worsham P."/>
            <person name="Chu M.C."/>
            <person name="Andersen G.L."/>
        </authorList>
    </citation>
    <scope>NUCLEOTIDE SEQUENCE [LARGE SCALE GENOMIC DNA]</scope>
    <source>
        <strain>Nepal516</strain>
    </source>
</reference>
<reference key="2">
    <citation type="submission" date="2009-04" db="EMBL/GenBank/DDBJ databases">
        <title>Yersinia pestis Nepal516A whole genome shotgun sequencing project.</title>
        <authorList>
            <person name="Plunkett G. III"/>
            <person name="Anderson B.D."/>
            <person name="Baumler D.J."/>
            <person name="Burland V."/>
            <person name="Cabot E.L."/>
            <person name="Glasner J.D."/>
            <person name="Mau B."/>
            <person name="Neeno-Eckwall E."/>
            <person name="Perna N.T."/>
            <person name="Munk A.C."/>
            <person name="Tapia R."/>
            <person name="Green L.D."/>
            <person name="Rogers Y.C."/>
            <person name="Detter J.C."/>
            <person name="Bruce D.C."/>
            <person name="Brettin T.S."/>
        </authorList>
    </citation>
    <scope>NUCLEOTIDE SEQUENCE [LARGE SCALE GENOMIC DNA]</scope>
    <source>
        <strain>Nepal516</strain>
    </source>
</reference>